<comment type="function">
    <text evidence="1">Catalyzes the synthesis of alpha-ribazole-5'-phosphate from nicotinate mononucleotide (NAMN) and 5,6-dimethylbenzimidazole (DMB).</text>
</comment>
<comment type="catalytic activity">
    <reaction evidence="1">
        <text>5,6-dimethylbenzimidazole + nicotinate beta-D-ribonucleotide = alpha-ribazole 5'-phosphate + nicotinate + H(+)</text>
        <dbReference type="Rhea" id="RHEA:11196"/>
        <dbReference type="ChEBI" id="CHEBI:15378"/>
        <dbReference type="ChEBI" id="CHEBI:15890"/>
        <dbReference type="ChEBI" id="CHEBI:32544"/>
        <dbReference type="ChEBI" id="CHEBI:57502"/>
        <dbReference type="ChEBI" id="CHEBI:57918"/>
        <dbReference type="EC" id="2.4.2.21"/>
    </reaction>
</comment>
<comment type="pathway">
    <text evidence="1">Nucleoside biosynthesis; alpha-ribazole biosynthesis; alpha-ribazole from 5,6-dimethylbenzimidazole: step 1/2.</text>
</comment>
<comment type="similarity">
    <text evidence="1">Belongs to the CobT family.</text>
</comment>
<keyword id="KW-0169">Cobalamin biosynthesis</keyword>
<keyword id="KW-0328">Glycosyltransferase</keyword>
<keyword id="KW-0808">Transferase</keyword>
<protein>
    <recommendedName>
        <fullName evidence="1">Nicotinate-nucleotide--dimethylbenzimidazole phosphoribosyltransferase</fullName>
        <shortName evidence="1">NN:DBI PRT</shortName>
        <ecNumber evidence="1">2.4.2.21</ecNumber>
    </recommendedName>
    <alternativeName>
        <fullName evidence="1">N(1)-alpha-phosphoribosyltransferase</fullName>
    </alternativeName>
</protein>
<reference key="1">
    <citation type="journal article" date="2000" name="DNA Res.">
        <title>Complete genome structure of the nitrogen-fixing symbiotic bacterium Mesorhizobium loti.</title>
        <authorList>
            <person name="Kaneko T."/>
            <person name="Nakamura Y."/>
            <person name="Sato S."/>
            <person name="Asamizu E."/>
            <person name="Kato T."/>
            <person name="Sasamoto S."/>
            <person name="Watanabe A."/>
            <person name="Idesawa K."/>
            <person name="Ishikawa A."/>
            <person name="Kawashima K."/>
            <person name="Kimura T."/>
            <person name="Kishida Y."/>
            <person name="Kiyokawa C."/>
            <person name="Kohara M."/>
            <person name="Matsumoto M."/>
            <person name="Matsuno A."/>
            <person name="Mochizuki Y."/>
            <person name="Nakayama S."/>
            <person name="Nakazaki N."/>
            <person name="Shimpo S."/>
            <person name="Sugimoto M."/>
            <person name="Takeuchi C."/>
            <person name="Yamada M."/>
            <person name="Tabata S."/>
        </authorList>
    </citation>
    <scope>NUCLEOTIDE SEQUENCE [LARGE SCALE GENOMIC DNA]</scope>
    <source>
        <strain>LMG 29417 / CECT 9101 / MAFF 303099</strain>
    </source>
</reference>
<proteinExistence type="inferred from homology"/>
<organism>
    <name type="scientific">Mesorhizobium japonicum (strain LMG 29417 / CECT 9101 / MAFF 303099)</name>
    <name type="common">Mesorhizobium loti (strain MAFF 303099)</name>
    <dbReference type="NCBI Taxonomy" id="266835"/>
    <lineage>
        <taxon>Bacteria</taxon>
        <taxon>Pseudomonadati</taxon>
        <taxon>Pseudomonadota</taxon>
        <taxon>Alphaproteobacteria</taxon>
        <taxon>Hyphomicrobiales</taxon>
        <taxon>Phyllobacteriaceae</taxon>
        <taxon>Mesorhizobium</taxon>
    </lineage>
</organism>
<feature type="chain" id="PRO_0000167065" description="Nicotinate-nucleotide--dimethylbenzimidazole phosphoribosyltransferase">
    <location>
        <begin position="1"/>
        <end position="336"/>
    </location>
</feature>
<feature type="active site" description="Proton acceptor" evidence="1">
    <location>
        <position position="304"/>
    </location>
</feature>
<name>COBT_RHILO</name>
<evidence type="ECO:0000255" key="1">
    <source>
        <dbReference type="HAMAP-Rule" id="MF_00230"/>
    </source>
</evidence>
<sequence length="336" mass="34409">MPFKSLDELRAACLDLPAGSDTAAKAVASRQDTLTKPQGSLGRLETIAAWLARWQGRDMPKLDRVKVFVFAGNHGVTAQGVSAYPSEVTVQMVANFAGGGAAINQLARIAGAELDVIPLDLDHPTGDFTQVPAMDEKAFLAAVSAGYDAVTKDLDLVCFGEMGIGNTTPAAAISAALFGGGAEKWTGRGTGVDDAGLKRKVVAIEAGLKRHAAALADPLGVAAALGGRELAAIFGATLAARHLGIPVLLDGFVCTAAAAPLARLHPTGLSHTIAAHVSAESGHRRLLEALGLPPLLDLGMRLGEGSGACLAVNIVRSALECHARMASFAEAGVSEK</sequence>
<dbReference type="EC" id="2.4.2.21" evidence="1"/>
<dbReference type="EMBL" id="BA000012">
    <property type="protein sequence ID" value="BAB48775.1"/>
    <property type="molecule type" value="Genomic_DNA"/>
</dbReference>
<dbReference type="RefSeq" id="WP_010910128.1">
    <property type="nucleotide sequence ID" value="NC_002678.2"/>
</dbReference>
<dbReference type="SMR" id="Q98KN9"/>
<dbReference type="KEGG" id="mlo:mlr1389"/>
<dbReference type="PATRIC" id="fig|266835.9.peg.1120"/>
<dbReference type="eggNOG" id="COG2038">
    <property type="taxonomic scope" value="Bacteria"/>
</dbReference>
<dbReference type="HOGENOM" id="CLU_002982_0_1_5"/>
<dbReference type="UniPathway" id="UPA00061">
    <property type="reaction ID" value="UER00516"/>
</dbReference>
<dbReference type="Proteomes" id="UP000000552">
    <property type="component" value="Chromosome"/>
</dbReference>
<dbReference type="GO" id="GO:0008939">
    <property type="term" value="F:nicotinate-nucleotide-dimethylbenzimidazole phosphoribosyltransferase activity"/>
    <property type="evidence" value="ECO:0007669"/>
    <property type="project" value="UniProtKB-UniRule"/>
</dbReference>
<dbReference type="GO" id="GO:0009236">
    <property type="term" value="P:cobalamin biosynthetic process"/>
    <property type="evidence" value="ECO:0007669"/>
    <property type="project" value="UniProtKB-KW"/>
</dbReference>
<dbReference type="CDD" id="cd02439">
    <property type="entry name" value="DMB-PRT_CobT"/>
    <property type="match status" value="1"/>
</dbReference>
<dbReference type="Gene3D" id="1.10.1610.10">
    <property type="match status" value="1"/>
</dbReference>
<dbReference type="Gene3D" id="3.40.50.10210">
    <property type="match status" value="1"/>
</dbReference>
<dbReference type="HAMAP" id="MF_00230">
    <property type="entry name" value="CobT"/>
    <property type="match status" value="1"/>
</dbReference>
<dbReference type="InterPro" id="IPR003200">
    <property type="entry name" value="Nict_dMeBzImd_PRibTrfase"/>
</dbReference>
<dbReference type="InterPro" id="IPR017846">
    <property type="entry name" value="Nict_dMeBzImd_PRibTrfase_bact"/>
</dbReference>
<dbReference type="InterPro" id="IPR023195">
    <property type="entry name" value="Nict_dMeBzImd_PRibTrfase_N"/>
</dbReference>
<dbReference type="InterPro" id="IPR036087">
    <property type="entry name" value="Nict_dMeBzImd_PRibTrfase_sf"/>
</dbReference>
<dbReference type="NCBIfam" id="TIGR03160">
    <property type="entry name" value="cobT_DBIPRT"/>
    <property type="match status" value="1"/>
</dbReference>
<dbReference type="NCBIfam" id="NF000996">
    <property type="entry name" value="PRK00105.1"/>
    <property type="match status" value="1"/>
</dbReference>
<dbReference type="PANTHER" id="PTHR43463">
    <property type="entry name" value="NICOTINATE-NUCLEOTIDE--DIMETHYLBENZIMIDAZOLE PHOSPHORIBOSYLTRANSFERASE"/>
    <property type="match status" value="1"/>
</dbReference>
<dbReference type="PANTHER" id="PTHR43463:SF1">
    <property type="entry name" value="NICOTINATE-NUCLEOTIDE--DIMETHYLBENZIMIDAZOLE PHOSPHORIBOSYLTRANSFERASE"/>
    <property type="match status" value="1"/>
</dbReference>
<dbReference type="Pfam" id="PF02277">
    <property type="entry name" value="DBI_PRT"/>
    <property type="match status" value="1"/>
</dbReference>
<dbReference type="SUPFAM" id="SSF52733">
    <property type="entry name" value="Nicotinate mononucleotide:5,6-dimethylbenzimidazole phosphoribosyltransferase (CobT)"/>
    <property type="match status" value="1"/>
</dbReference>
<gene>
    <name evidence="1" type="primary">cobT</name>
    <name type="ordered locus">mlr1389</name>
</gene>
<accession>Q98KN9</accession>